<feature type="chain" id="PRO_0000293240" description="Small ribosomal subunit protein uS4">
    <location>
        <begin position="1"/>
        <end position="209"/>
    </location>
</feature>
<feature type="domain" description="S4 RNA-binding" evidence="1">
    <location>
        <begin position="99"/>
        <end position="179"/>
    </location>
</feature>
<gene>
    <name evidence="1" type="primary">rpsD</name>
    <name type="ordered locus">azo3392</name>
</gene>
<accession>A1KB02</accession>
<proteinExistence type="inferred from homology"/>
<evidence type="ECO:0000255" key="1">
    <source>
        <dbReference type="HAMAP-Rule" id="MF_01306"/>
    </source>
</evidence>
<evidence type="ECO:0000305" key="2"/>
<keyword id="KW-1185">Reference proteome</keyword>
<keyword id="KW-0687">Ribonucleoprotein</keyword>
<keyword id="KW-0689">Ribosomal protein</keyword>
<keyword id="KW-0694">RNA-binding</keyword>
<keyword id="KW-0699">rRNA-binding</keyword>
<name>RS4_AZOSB</name>
<dbReference type="EMBL" id="AM406670">
    <property type="protein sequence ID" value="CAL96008.1"/>
    <property type="molecule type" value="Genomic_DNA"/>
</dbReference>
<dbReference type="RefSeq" id="WP_011767115.1">
    <property type="nucleotide sequence ID" value="NC_008702.1"/>
</dbReference>
<dbReference type="SMR" id="A1KB02"/>
<dbReference type="STRING" id="62928.azo3392"/>
<dbReference type="KEGG" id="aoa:dqs_3531"/>
<dbReference type="KEGG" id="azo:azo3392"/>
<dbReference type="eggNOG" id="COG0522">
    <property type="taxonomic scope" value="Bacteria"/>
</dbReference>
<dbReference type="HOGENOM" id="CLU_092403_0_2_4"/>
<dbReference type="OrthoDB" id="9803672at2"/>
<dbReference type="Proteomes" id="UP000002588">
    <property type="component" value="Chromosome"/>
</dbReference>
<dbReference type="GO" id="GO:0015935">
    <property type="term" value="C:small ribosomal subunit"/>
    <property type="evidence" value="ECO:0007669"/>
    <property type="project" value="InterPro"/>
</dbReference>
<dbReference type="GO" id="GO:0019843">
    <property type="term" value="F:rRNA binding"/>
    <property type="evidence" value="ECO:0007669"/>
    <property type="project" value="UniProtKB-UniRule"/>
</dbReference>
<dbReference type="GO" id="GO:0003735">
    <property type="term" value="F:structural constituent of ribosome"/>
    <property type="evidence" value="ECO:0007669"/>
    <property type="project" value="InterPro"/>
</dbReference>
<dbReference type="GO" id="GO:0042274">
    <property type="term" value="P:ribosomal small subunit biogenesis"/>
    <property type="evidence" value="ECO:0007669"/>
    <property type="project" value="TreeGrafter"/>
</dbReference>
<dbReference type="GO" id="GO:0006412">
    <property type="term" value="P:translation"/>
    <property type="evidence" value="ECO:0007669"/>
    <property type="project" value="UniProtKB-UniRule"/>
</dbReference>
<dbReference type="CDD" id="cd00165">
    <property type="entry name" value="S4"/>
    <property type="match status" value="1"/>
</dbReference>
<dbReference type="FunFam" id="1.10.1050.10:FF:000001">
    <property type="entry name" value="30S ribosomal protein S4"/>
    <property type="match status" value="1"/>
</dbReference>
<dbReference type="FunFam" id="3.10.290.10:FF:000001">
    <property type="entry name" value="30S ribosomal protein S4"/>
    <property type="match status" value="1"/>
</dbReference>
<dbReference type="Gene3D" id="1.10.1050.10">
    <property type="entry name" value="Ribosomal Protein S4 Delta 41, Chain A, domain 1"/>
    <property type="match status" value="1"/>
</dbReference>
<dbReference type="Gene3D" id="3.10.290.10">
    <property type="entry name" value="RNA-binding S4 domain"/>
    <property type="match status" value="1"/>
</dbReference>
<dbReference type="HAMAP" id="MF_01306_B">
    <property type="entry name" value="Ribosomal_uS4_B"/>
    <property type="match status" value="1"/>
</dbReference>
<dbReference type="InterPro" id="IPR022801">
    <property type="entry name" value="Ribosomal_uS4"/>
</dbReference>
<dbReference type="InterPro" id="IPR005709">
    <property type="entry name" value="Ribosomal_uS4_bac-type"/>
</dbReference>
<dbReference type="InterPro" id="IPR001912">
    <property type="entry name" value="Ribosomal_uS4_N"/>
</dbReference>
<dbReference type="InterPro" id="IPR002942">
    <property type="entry name" value="S4_RNA-bd"/>
</dbReference>
<dbReference type="InterPro" id="IPR036986">
    <property type="entry name" value="S4_RNA-bd_sf"/>
</dbReference>
<dbReference type="NCBIfam" id="NF003717">
    <property type="entry name" value="PRK05327.1"/>
    <property type="match status" value="1"/>
</dbReference>
<dbReference type="NCBIfam" id="TIGR01017">
    <property type="entry name" value="rpsD_bact"/>
    <property type="match status" value="1"/>
</dbReference>
<dbReference type="PANTHER" id="PTHR11831">
    <property type="entry name" value="30S 40S RIBOSOMAL PROTEIN"/>
    <property type="match status" value="1"/>
</dbReference>
<dbReference type="PANTHER" id="PTHR11831:SF4">
    <property type="entry name" value="SMALL RIBOSOMAL SUBUNIT PROTEIN US4M"/>
    <property type="match status" value="1"/>
</dbReference>
<dbReference type="Pfam" id="PF00163">
    <property type="entry name" value="Ribosomal_S4"/>
    <property type="match status" value="1"/>
</dbReference>
<dbReference type="Pfam" id="PF01479">
    <property type="entry name" value="S4"/>
    <property type="match status" value="1"/>
</dbReference>
<dbReference type="SMART" id="SM01390">
    <property type="entry name" value="Ribosomal_S4"/>
    <property type="match status" value="1"/>
</dbReference>
<dbReference type="SMART" id="SM00363">
    <property type="entry name" value="S4"/>
    <property type="match status" value="1"/>
</dbReference>
<dbReference type="SUPFAM" id="SSF55174">
    <property type="entry name" value="Alpha-L RNA-binding motif"/>
    <property type="match status" value="1"/>
</dbReference>
<dbReference type="PROSITE" id="PS50889">
    <property type="entry name" value="S4"/>
    <property type="match status" value="1"/>
</dbReference>
<sequence length="209" mass="23621">MARNLDPKCRQCRREGEKLFLKGEKCFTDKCAIERRAYAPGQHGQRSGQRLSGYGVQLREKQKIRRLYGVLERQFRKVYAEADRRRGQTGENLLQLLEGRLDSVAYRMGFGASRAEARQVVRHNGVLVNGKRVNIPSYTVRPGDVIELAEGTKGHLRVKAALEAAESRGFPEWIEVDAKAGKGVFKAYPQRSELSATINEGLVVELYSR</sequence>
<organism>
    <name type="scientific">Azoarcus sp. (strain BH72)</name>
    <dbReference type="NCBI Taxonomy" id="418699"/>
    <lineage>
        <taxon>Bacteria</taxon>
        <taxon>Pseudomonadati</taxon>
        <taxon>Pseudomonadota</taxon>
        <taxon>Betaproteobacteria</taxon>
        <taxon>Rhodocyclales</taxon>
        <taxon>Zoogloeaceae</taxon>
        <taxon>Azoarcus</taxon>
    </lineage>
</organism>
<reference key="1">
    <citation type="journal article" date="2006" name="Nat. Biotechnol.">
        <title>Complete genome of the mutualistic, N2-fixing grass endophyte Azoarcus sp. strain BH72.</title>
        <authorList>
            <person name="Krause A."/>
            <person name="Ramakumar A."/>
            <person name="Bartels D."/>
            <person name="Battistoni F."/>
            <person name="Bekel T."/>
            <person name="Boch J."/>
            <person name="Boehm M."/>
            <person name="Friedrich F."/>
            <person name="Hurek T."/>
            <person name="Krause L."/>
            <person name="Linke B."/>
            <person name="McHardy A.C."/>
            <person name="Sarkar A."/>
            <person name="Schneiker S."/>
            <person name="Syed A.A."/>
            <person name="Thauer R."/>
            <person name="Vorhoelter F.-J."/>
            <person name="Weidner S."/>
            <person name="Puehler A."/>
            <person name="Reinhold-Hurek B."/>
            <person name="Kaiser O."/>
            <person name="Goesmann A."/>
        </authorList>
    </citation>
    <scope>NUCLEOTIDE SEQUENCE [LARGE SCALE GENOMIC DNA]</scope>
    <source>
        <strain>BH72</strain>
    </source>
</reference>
<protein>
    <recommendedName>
        <fullName evidence="1">Small ribosomal subunit protein uS4</fullName>
    </recommendedName>
    <alternativeName>
        <fullName evidence="2">30S ribosomal protein S4</fullName>
    </alternativeName>
</protein>
<comment type="function">
    <text evidence="1">One of the primary rRNA binding proteins, it binds directly to 16S rRNA where it nucleates assembly of the body of the 30S subunit.</text>
</comment>
<comment type="function">
    <text evidence="1">With S5 and S12 plays an important role in translational accuracy.</text>
</comment>
<comment type="subunit">
    <text evidence="1">Part of the 30S ribosomal subunit. Contacts protein S5. The interaction surface between S4 and S5 is involved in control of translational fidelity.</text>
</comment>
<comment type="similarity">
    <text evidence="1">Belongs to the universal ribosomal protein uS4 family.</text>
</comment>